<comment type="miscellaneous">
    <text evidence="1">Partially overlaps YBL095W.</text>
</comment>
<comment type="caution">
    <text evidence="2">Product of a dubious gene prediction unlikely to encode a functional protein. Because of that it is not part of the S.cerevisiae S288c complete/reference proteome set.</text>
</comment>
<name>YBJ6_YEAST</name>
<sequence length="102" mass="11087">MSTLCSSIGWRLLVALINSAGVCGSFNDRTPASSGHAFTNAPTPNVKPAVGKITALLTNLNRNGIVLDILELTLDLSCHLVIVYKNKYLVLYPLFEAVPFRR</sequence>
<feature type="chain" id="PRO_0000014308" description="Putative uncharacterized protein YBL096C">
    <location>
        <begin position="1"/>
        <end position="102"/>
    </location>
</feature>
<accession>P38171</accession>
<evidence type="ECO:0000305" key="1"/>
<evidence type="ECO:0000305" key="2">
    <source>
    </source>
</evidence>
<protein>
    <recommendedName>
        <fullName>Putative uncharacterized protein YBL096C</fullName>
    </recommendedName>
</protein>
<dbReference type="EMBL" id="X79489">
    <property type="protein sequence ID" value="CAA56006.1"/>
    <property type="molecule type" value="Genomic_DNA"/>
</dbReference>
<dbReference type="EMBL" id="Z35857">
    <property type="protein sequence ID" value="CAA84916.1"/>
    <property type="molecule type" value="Genomic_DNA"/>
</dbReference>
<dbReference type="EMBL" id="AY558327">
    <property type="protein sequence ID" value="AAS56653.1"/>
    <property type="molecule type" value="Genomic_DNA"/>
</dbReference>
<dbReference type="PIR" id="S45406">
    <property type="entry name" value="S45406"/>
</dbReference>
<dbReference type="IntAct" id="P38171">
    <property type="interactions" value="1"/>
</dbReference>
<dbReference type="PaxDb" id="4932-YBL096C"/>
<dbReference type="EnsemblFungi" id="YBL096C_mRNA">
    <property type="protein sequence ID" value="YBL096C"/>
    <property type="gene ID" value="YBL096C"/>
</dbReference>
<dbReference type="AGR" id="SGD:S000000192"/>
<dbReference type="SGD" id="S000000192">
    <property type="gene designation" value="YBL096C"/>
</dbReference>
<dbReference type="HOGENOM" id="CLU_2279079_0_0_1"/>
<gene>
    <name type="ordered locus">YBL096C</name>
    <name type="ORF">YBL0834</name>
</gene>
<organism>
    <name type="scientific">Saccharomyces cerevisiae (strain ATCC 204508 / S288c)</name>
    <name type="common">Baker's yeast</name>
    <dbReference type="NCBI Taxonomy" id="559292"/>
    <lineage>
        <taxon>Eukaryota</taxon>
        <taxon>Fungi</taxon>
        <taxon>Dikarya</taxon>
        <taxon>Ascomycota</taxon>
        <taxon>Saccharomycotina</taxon>
        <taxon>Saccharomycetes</taxon>
        <taxon>Saccharomycetales</taxon>
        <taxon>Saccharomycetaceae</taxon>
        <taxon>Saccharomyces</taxon>
    </lineage>
</organism>
<reference key="1">
    <citation type="journal article" date="1995" name="Yeast">
        <title>Sequence analysis of a 78.6 kb segment of the left end of Saccharomyces cerevisiae chromosome II.</title>
        <authorList>
            <person name="Obermaier B."/>
            <person name="Gassenhuber J."/>
            <person name="Piravandi E."/>
            <person name="Domdey H."/>
        </authorList>
    </citation>
    <scope>NUCLEOTIDE SEQUENCE [GENOMIC DNA]</scope>
    <source>
        <strain>ATCC 204508 / S288c</strain>
    </source>
</reference>
<reference key="2">
    <citation type="journal article" date="1994" name="EMBO J.">
        <title>Complete DNA sequence of yeast chromosome II.</title>
        <authorList>
            <person name="Feldmann H."/>
            <person name="Aigle M."/>
            <person name="Aljinovic G."/>
            <person name="Andre B."/>
            <person name="Baclet M.C."/>
            <person name="Barthe C."/>
            <person name="Baur A."/>
            <person name="Becam A.-M."/>
            <person name="Biteau N."/>
            <person name="Boles E."/>
            <person name="Brandt T."/>
            <person name="Brendel M."/>
            <person name="Brueckner M."/>
            <person name="Bussereau F."/>
            <person name="Christiansen C."/>
            <person name="Contreras R."/>
            <person name="Crouzet M."/>
            <person name="Cziepluch C."/>
            <person name="Demolis N."/>
            <person name="Delaveau T."/>
            <person name="Doignon F."/>
            <person name="Domdey H."/>
            <person name="Duesterhus S."/>
            <person name="Dubois E."/>
            <person name="Dujon B."/>
            <person name="El Bakkoury M."/>
            <person name="Entian K.-D."/>
            <person name="Feuermann M."/>
            <person name="Fiers W."/>
            <person name="Fobo G.M."/>
            <person name="Fritz C."/>
            <person name="Gassenhuber J."/>
            <person name="Glansdorff N."/>
            <person name="Goffeau A."/>
            <person name="Grivell L.A."/>
            <person name="de Haan M."/>
            <person name="Hein C."/>
            <person name="Herbert C.J."/>
            <person name="Hollenberg C.P."/>
            <person name="Holmstroem K."/>
            <person name="Jacq C."/>
            <person name="Jacquet M."/>
            <person name="Jauniaux J.-C."/>
            <person name="Jonniaux J.-L."/>
            <person name="Kallesoee T."/>
            <person name="Kiesau P."/>
            <person name="Kirchrath L."/>
            <person name="Koetter P."/>
            <person name="Korol S."/>
            <person name="Liebl S."/>
            <person name="Logghe M."/>
            <person name="Lohan A.J.E."/>
            <person name="Louis E.J."/>
            <person name="Li Z.Y."/>
            <person name="Maat M.J."/>
            <person name="Mallet L."/>
            <person name="Mannhaupt G."/>
            <person name="Messenguy F."/>
            <person name="Miosga T."/>
            <person name="Molemans F."/>
            <person name="Mueller S."/>
            <person name="Nasr F."/>
            <person name="Obermaier B."/>
            <person name="Perea J."/>
            <person name="Pierard A."/>
            <person name="Piravandi E."/>
            <person name="Pohl F.M."/>
            <person name="Pohl T.M."/>
            <person name="Potier S."/>
            <person name="Proft M."/>
            <person name="Purnelle B."/>
            <person name="Ramezani Rad M."/>
            <person name="Rieger M."/>
            <person name="Rose M."/>
            <person name="Schaaff-Gerstenschlaeger I."/>
            <person name="Scherens B."/>
            <person name="Schwarzlose C."/>
            <person name="Skala J."/>
            <person name="Slonimski P.P."/>
            <person name="Smits P.H.M."/>
            <person name="Souciet J.-L."/>
            <person name="Steensma H.Y."/>
            <person name="Stucka R."/>
            <person name="Urrestarazu L.A."/>
            <person name="van der Aart Q.J.M."/>
            <person name="Van Dyck L."/>
            <person name="Vassarotti A."/>
            <person name="Vetter I."/>
            <person name="Vierendeels F."/>
            <person name="Vissers S."/>
            <person name="Wagner G."/>
            <person name="de Wergifosse P."/>
            <person name="Wolfe K.H."/>
            <person name="Zagulski M."/>
            <person name="Zimmermann F.K."/>
            <person name="Mewes H.-W."/>
            <person name="Kleine K."/>
        </authorList>
    </citation>
    <scope>NUCLEOTIDE SEQUENCE [LARGE SCALE GENOMIC DNA]</scope>
    <source>
        <strain>ATCC 204508 / S288c</strain>
    </source>
</reference>
<reference key="3">
    <citation type="journal article" date="2014" name="G3 (Bethesda)">
        <title>The reference genome sequence of Saccharomyces cerevisiae: Then and now.</title>
        <authorList>
            <person name="Engel S.R."/>
            <person name="Dietrich F.S."/>
            <person name="Fisk D.G."/>
            <person name="Binkley G."/>
            <person name="Balakrishnan R."/>
            <person name="Costanzo M.C."/>
            <person name="Dwight S.S."/>
            <person name="Hitz B.C."/>
            <person name="Karra K."/>
            <person name="Nash R.S."/>
            <person name="Weng S."/>
            <person name="Wong E.D."/>
            <person name="Lloyd P."/>
            <person name="Skrzypek M.S."/>
            <person name="Miyasato S.R."/>
            <person name="Simison M."/>
            <person name="Cherry J.M."/>
        </authorList>
    </citation>
    <scope>GENOME REANNOTATION</scope>
    <source>
        <strain>ATCC 204508 / S288c</strain>
    </source>
</reference>
<reference key="4">
    <citation type="journal article" date="2007" name="Genome Res.">
        <title>Approaching a complete repository of sequence-verified protein-encoding clones for Saccharomyces cerevisiae.</title>
        <authorList>
            <person name="Hu Y."/>
            <person name="Rolfs A."/>
            <person name="Bhullar B."/>
            <person name="Murthy T.V.S."/>
            <person name="Zhu C."/>
            <person name="Berger M.F."/>
            <person name="Camargo A.A."/>
            <person name="Kelley F."/>
            <person name="McCarron S."/>
            <person name="Jepson D."/>
            <person name="Richardson A."/>
            <person name="Raphael J."/>
            <person name="Moreira D."/>
            <person name="Taycher E."/>
            <person name="Zuo D."/>
            <person name="Mohr S."/>
            <person name="Kane M.F."/>
            <person name="Williamson J."/>
            <person name="Simpson A.J.G."/>
            <person name="Bulyk M.L."/>
            <person name="Harlow E."/>
            <person name="Marsischky G."/>
            <person name="Kolodner R.D."/>
            <person name="LaBaer J."/>
        </authorList>
    </citation>
    <scope>NUCLEOTIDE SEQUENCE [GENOMIC DNA]</scope>
    <source>
        <strain>ATCC 204508 / S288c</strain>
    </source>
</reference>
<proteinExistence type="uncertain"/>